<organism>
    <name type="scientific">Bacillus cereus (strain ATCC 10987 / NRS 248)</name>
    <dbReference type="NCBI Taxonomy" id="222523"/>
    <lineage>
        <taxon>Bacteria</taxon>
        <taxon>Bacillati</taxon>
        <taxon>Bacillota</taxon>
        <taxon>Bacilli</taxon>
        <taxon>Bacillales</taxon>
        <taxon>Bacillaceae</taxon>
        <taxon>Bacillus</taxon>
        <taxon>Bacillus cereus group</taxon>
    </lineage>
</organism>
<feature type="chain" id="PRO_0000241844" description="Orotidine 5'-phosphate decarboxylase">
    <location>
        <begin position="1"/>
        <end position="238"/>
    </location>
</feature>
<feature type="active site" description="Proton donor" evidence="1">
    <location>
        <position position="61"/>
    </location>
</feature>
<feature type="binding site" evidence="1">
    <location>
        <position position="10"/>
    </location>
    <ligand>
        <name>substrate</name>
    </ligand>
</feature>
<feature type="binding site" evidence="1">
    <location>
        <position position="32"/>
    </location>
    <ligand>
        <name>substrate</name>
    </ligand>
</feature>
<feature type="binding site" evidence="1">
    <location>
        <begin position="59"/>
        <end position="68"/>
    </location>
    <ligand>
        <name>substrate</name>
    </ligand>
</feature>
<feature type="binding site" evidence="1">
    <location>
        <position position="122"/>
    </location>
    <ligand>
        <name>substrate</name>
    </ligand>
</feature>
<feature type="binding site" evidence="1">
    <location>
        <position position="184"/>
    </location>
    <ligand>
        <name>substrate</name>
    </ligand>
</feature>
<feature type="binding site" evidence="1">
    <location>
        <position position="193"/>
    </location>
    <ligand>
        <name>substrate</name>
    </ligand>
</feature>
<feature type="binding site" evidence="1">
    <location>
        <position position="213"/>
    </location>
    <ligand>
        <name>substrate</name>
    </ligand>
</feature>
<feature type="binding site" evidence="1">
    <location>
        <position position="214"/>
    </location>
    <ligand>
        <name>substrate</name>
    </ligand>
</feature>
<keyword id="KW-0210">Decarboxylase</keyword>
<keyword id="KW-0456">Lyase</keyword>
<keyword id="KW-0665">Pyrimidine biosynthesis</keyword>
<comment type="function">
    <text evidence="1">Catalyzes the decarboxylation of orotidine 5'-monophosphate (OMP) to uridine 5'-monophosphate (UMP).</text>
</comment>
<comment type="catalytic activity">
    <reaction evidence="1">
        <text>orotidine 5'-phosphate + H(+) = UMP + CO2</text>
        <dbReference type="Rhea" id="RHEA:11596"/>
        <dbReference type="ChEBI" id="CHEBI:15378"/>
        <dbReference type="ChEBI" id="CHEBI:16526"/>
        <dbReference type="ChEBI" id="CHEBI:57538"/>
        <dbReference type="ChEBI" id="CHEBI:57865"/>
        <dbReference type="EC" id="4.1.1.23"/>
    </reaction>
</comment>
<comment type="pathway">
    <text evidence="1">Pyrimidine metabolism; UMP biosynthesis via de novo pathway; UMP from orotate: step 2/2.</text>
</comment>
<comment type="subunit">
    <text evidence="1">Homodimer.</text>
</comment>
<comment type="similarity">
    <text evidence="1">Belongs to the OMP decarboxylase family. Type 1 subfamily.</text>
</comment>
<accession>Q732I6</accession>
<protein>
    <recommendedName>
        <fullName evidence="1">Orotidine 5'-phosphate decarboxylase</fullName>
        <ecNumber evidence="1">4.1.1.23</ecNumber>
    </recommendedName>
    <alternativeName>
        <fullName evidence="1">OMP decarboxylase</fullName>
        <shortName evidence="1">OMPDCase</shortName>
        <shortName evidence="1">OMPdecase</shortName>
    </alternativeName>
</protein>
<dbReference type="EC" id="4.1.1.23" evidence="1"/>
<dbReference type="EMBL" id="AE017194">
    <property type="protein sequence ID" value="AAS42831.1"/>
    <property type="molecule type" value="Genomic_DNA"/>
</dbReference>
<dbReference type="SMR" id="Q732I6"/>
<dbReference type="KEGG" id="bca:BCE_3928"/>
<dbReference type="HOGENOM" id="CLU_067069_1_1_9"/>
<dbReference type="UniPathway" id="UPA00070">
    <property type="reaction ID" value="UER00120"/>
</dbReference>
<dbReference type="Proteomes" id="UP000002527">
    <property type="component" value="Chromosome"/>
</dbReference>
<dbReference type="GO" id="GO:0005829">
    <property type="term" value="C:cytosol"/>
    <property type="evidence" value="ECO:0007669"/>
    <property type="project" value="TreeGrafter"/>
</dbReference>
<dbReference type="GO" id="GO:0004590">
    <property type="term" value="F:orotidine-5'-phosphate decarboxylase activity"/>
    <property type="evidence" value="ECO:0007669"/>
    <property type="project" value="UniProtKB-UniRule"/>
</dbReference>
<dbReference type="GO" id="GO:0006207">
    <property type="term" value="P:'de novo' pyrimidine nucleobase biosynthetic process"/>
    <property type="evidence" value="ECO:0007669"/>
    <property type="project" value="InterPro"/>
</dbReference>
<dbReference type="GO" id="GO:0044205">
    <property type="term" value="P:'de novo' UMP biosynthetic process"/>
    <property type="evidence" value="ECO:0007669"/>
    <property type="project" value="UniProtKB-UniRule"/>
</dbReference>
<dbReference type="CDD" id="cd04725">
    <property type="entry name" value="OMP_decarboxylase_like"/>
    <property type="match status" value="1"/>
</dbReference>
<dbReference type="FunFam" id="3.20.20.70:FF:000015">
    <property type="entry name" value="Orotidine 5'-phosphate decarboxylase"/>
    <property type="match status" value="1"/>
</dbReference>
<dbReference type="Gene3D" id="3.20.20.70">
    <property type="entry name" value="Aldolase class I"/>
    <property type="match status" value="1"/>
</dbReference>
<dbReference type="HAMAP" id="MF_01200_B">
    <property type="entry name" value="OMPdecase_type1_B"/>
    <property type="match status" value="1"/>
</dbReference>
<dbReference type="InterPro" id="IPR013785">
    <property type="entry name" value="Aldolase_TIM"/>
</dbReference>
<dbReference type="InterPro" id="IPR014732">
    <property type="entry name" value="OMPdecase"/>
</dbReference>
<dbReference type="InterPro" id="IPR018089">
    <property type="entry name" value="OMPdecase_AS"/>
</dbReference>
<dbReference type="InterPro" id="IPR047596">
    <property type="entry name" value="OMPdecase_bac"/>
</dbReference>
<dbReference type="InterPro" id="IPR001754">
    <property type="entry name" value="OMPdeCOase_dom"/>
</dbReference>
<dbReference type="InterPro" id="IPR011060">
    <property type="entry name" value="RibuloseP-bd_barrel"/>
</dbReference>
<dbReference type="NCBIfam" id="NF001273">
    <property type="entry name" value="PRK00230.1"/>
    <property type="match status" value="1"/>
</dbReference>
<dbReference type="NCBIfam" id="TIGR01740">
    <property type="entry name" value="pyrF"/>
    <property type="match status" value="1"/>
</dbReference>
<dbReference type="PANTHER" id="PTHR32119">
    <property type="entry name" value="OROTIDINE 5'-PHOSPHATE DECARBOXYLASE"/>
    <property type="match status" value="1"/>
</dbReference>
<dbReference type="PANTHER" id="PTHR32119:SF2">
    <property type="entry name" value="OROTIDINE 5'-PHOSPHATE DECARBOXYLASE"/>
    <property type="match status" value="1"/>
</dbReference>
<dbReference type="Pfam" id="PF00215">
    <property type="entry name" value="OMPdecase"/>
    <property type="match status" value="1"/>
</dbReference>
<dbReference type="SMART" id="SM00934">
    <property type="entry name" value="OMPdecase"/>
    <property type="match status" value="1"/>
</dbReference>
<dbReference type="SUPFAM" id="SSF51366">
    <property type="entry name" value="Ribulose-phoshate binding barrel"/>
    <property type="match status" value="1"/>
</dbReference>
<dbReference type="PROSITE" id="PS00156">
    <property type="entry name" value="OMPDECASE"/>
    <property type="match status" value="1"/>
</dbReference>
<sequence>MSQSLIVALDFPGKQDVEQFLRHFEGEELFVKVGMELFYKEGPAIITYLKEKGHKIFLDLKLHDIPNTVKSAMRSLASLDVDMVNVHAAGGSSMMKAAIEGLEEGKQEGKERPICIAVTQLTSTSEAMMKKEIGIEKTLEEAVAHYAKLTKESGLDGVVCSTLEVPKLREVCGNEFVTVTPGIRLASDDVNDQVRVATPKRARELGSSYIVVGRSITKAENPLEAYKTVKQQWEGVTV</sequence>
<proteinExistence type="inferred from homology"/>
<evidence type="ECO:0000255" key="1">
    <source>
        <dbReference type="HAMAP-Rule" id="MF_01200"/>
    </source>
</evidence>
<reference key="1">
    <citation type="journal article" date="2004" name="Nucleic Acids Res.">
        <title>The genome sequence of Bacillus cereus ATCC 10987 reveals metabolic adaptations and a large plasmid related to Bacillus anthracis pXO1.</title>
        <authorList>
            <person name="Rasko D.A."/>
            <person name="Ravel J."/>
            <person name="Oekstad O.A."/>
            <person name="Helgason E."/>
            <person name="Cer R.Z."/>
            <person name="Jiang L."/>
            <person name="Shores K.A."/>
            <person name="Fouts D.E."/>
            <person name="Tourasse N.J."/>
            <person name="Angiuoli S.V."/>
            <person name="Kolonay J.F."/>
            <person name="Nelson W.C."/>
            <person name="Kolstoe A.-B."/>
            <person name="Fraser C.M."/>
            <person name="Read T.D."/>
        </authorList>
    </citation>
    <scope>NUCLEOTIDE SEQUENCE [LARGE SCALE GENOMIC DNA]</scope>
    <source>
        <strain>ATCC 10987 / NRS 248</strain>
    </source>
</reference>
<name>PYRF_BACC1</name>
<gene>
    <name evidence="1" type="primary">pyrF</name>
    <name type="ordered locus">BCE_3928</name>
</gene>